<feature type="chain" id="PRO_0000133964" description="Enolase">
    <location>
        <begin position="1"/>
        <end position="434"/>
    </location>
</feature>
<feature type="active site" description="Proton donor" evidence="1">
    <location>
        <position position="207"/>
    </location>
</feature>
<feature type="active site" description="Proton acceptor" evidence="1">
    <location>
        <position position="343"/>
    </location>
</feature>
<feature type="binding site" evidence="1">
    <location>
        <position position="165"/>
    </location>
    <ligand>
        <name>(2R)-2-phosphoglycerate</name>
        <dbReference type="ChEBI" id="CHEBI:58289"/>
    </ligand>
</feature>
<feature type="binding site" evidence="1">
    <location>
        <position position="244"/>
    </location>
    <ligand>
        <name>Mg(2+)</name>
        <dbReference type="ChEBI" id="CHEBI:18420"/>
    </ligand>
</feature>
<feature type="binding site" evidence="1">
    <location>
        <position position="291"/>
    </location>
    <ligand>
        <name>Mg(2+)</name>
        <dbReference type="ChEBI" id="CHEBI:18420"/>
    </ligand>
</feature>
<feature type="binding site" evidence="1">
    <location>
        <position position="318"/>
    </location>
    <ligand>
        <name>Mg(2+)</name>
        <dbReference type="ChEBI" id="CHEBI:18420"/>
    </ligand>
</feature>
<feature type="binding site" evidence="1">
    <location>
        <position position="343"/>
    </location>
    <ligand>
        <name>(2R)-2-phosphoglycerate</name>
        <dbReference type="ChEBI" id="CHEBI:58289"/>
    </ligand>
</feature>
<feature type="binding site" evidence="1">
    <location>
        <position position="372"/>
    </location>
    <ligand>
        <name>(2R)-2-phosphoglycerate</name>
        <dbReference type="ChEBI" id="CHEBI:58289"/>
    </ligand>
</feature>
<feature type="binding site" evidence="1">
    <location>
        <position position="373"/>
    </location>
    <ligand>
        <name>(2R)-2-phosphoglycerate</name>
        <dbReference type="ChEBI" id="CHEBI:58289"/>
    </ligand>
</feature>
<feature type="binding site" evidence="1">
    <location>
        <position position="394"/>
    </location>
    <ligand>
        <name>(2R)-2-phosphoglycerate</name>
        <dbReference type="ChEBI" id="CHEBI:58289"/>
    </ligand>
</feature>
<sequence length="434" mass="47117">MPIITDVYAREVLDSRGNPTVEVEVLTESGAFGRALVPSGASTGEHEAVELRDGDKSRYLGKGVTKAVENVNEIIAPEIIEGEFSVLDQVSIDKMMIALDGTPNKGKLGANAILGVSIAVARAAADLLGQPLYKYLGGFNGKQLPVPMMNIVNGGSHSDAPIAFQEFMILPVGATTFKESLRWGTEIFHNLKSILSKRGLETAVGDEGGFAPKFEGTEDAVETIIQAIEAAGYKPGEEVFLGFDCASSEFYENGVYDYSKFEGEHGAKRTAAEQVDYLEQLVDKYPIITIEDGMDENDWDGWKQLTERIGDRVQLVGDDLFVTNTEILAKGIENGIGNSILIKVNQIGTLTETFDAIEMAQKAGYTAVVSHRSGETEDTTIADIAVATNAGQIKTGSLSRTDRIAKYNQLLRIEDELFETAKYDGIKSFYNLDK</sequence>
<name>ENO_STAAC</name>
<evidence type="ECO:0000255" key="1">
    <source>
        <dbReference type="HAMAP-Rule" id="MF_00318"/>
    </source>
</evidence>
<gene>
    <name evidence="1" type="primary">eno</name>
    <name type="ordered locus">SACOL0842</name>
</gene>
<reference key="1">
    <citation type="journal article" date="2005" name="J. Bacteriol.">
        <title>Insights on evolution of virulence and resistance from the complete genome analysis of an early methicillin-resistant Staphylococcus aureus strain and a biofilm-producing methicillin-resistant Staphylococcus epidermidis strain.</title>
        <authorList>
            <person name="Gill S.R."/>
            <person name="Fouts D.E."/>
            <person name="Archer G.L."/>
            <person name="Mongodin E.F."/>
            <person name="DeBoy R.T."/>
            <person name="Ravel J."/>
            <person name="Paulsen I.T."/>
            <person name="Kolonay J.F."/>
            <person name="Brinkac L.M."/>
            <person name="Beanan M.J."/>
            <person name="Dodson R.J."/>
            <person name="Daugherty S.C."/>
            <person name="Madupu R."/>
            <person name="Angiuoli S.V."/>
            <person name="Durkin A.S."/>
            <person name="Haft D.H."/>
            <person name="Vamathevan J.J."/>
            <person name="Khouri H."/>
            <person name="Utterback T.R."/>
            <person name="Lee C."/>
            <person name="Dimitrov G."/>
            <person name="Jiang L."/>
            <person name="Qin H."/>
            <person name="Weidman J."/>
            <person name="Tran K."/>
            <person name="Kang K.H."/>
            <person name="Hance I.R."/>
            <person name="Nelson K.E."/>
            <person name="Fraser C.M."/>
        </authorList>
    </citation>
    <scope>NUCLEOTIDE SEQUENCE [LARGE SCALE GENOMIC DNA]</scope>
    <source>
        <strain>COL</strain>
    </source>
</reference>
<protein>
    <recommendedName>
        <fullName evidence="1">Enolase</fullName>
        <ecNumber evidence="1">4.2.1.11</ecNumber>
    </recommendedName>
    <alternativeName>
        <fullName evidence="1">2-phospho-D-glycerate hydro-lyase</fullName>
    </alternativeName>
    <alternativeName>
        <fullName evidence="1">2-phosphoglycerate dehydratase</fullName>
    </alternativeName>
</protein>
<dbReference type="EC" id="4.2.1.11" evidence="1"/>
<dbReference type="EMBL" id="CP000046">
    <property type="protein sequence ID" value="AAW36398.1"/>
    <property type="molecule type" value="Genomic_DNA"/>
</dbReference>
<dbReference type="RefSeq" id="WP_001121760.1">
    <property type="nucleotide sequence ID" value="NZ_JBGOFO010000005.1"/>
</dbReference>
<dbReference type="SMR" id="Q5HHP1"/>
<dbReference type="KEGG" id="sac:SACOL0842"/>
<dbReference type="HOGENOM" id="CLU_031223_2_1_9"/>
<dbReference type="UniPathway" id="UPA00109">
    <property type="reaction ID" value="UER00187"/>
</dbReference>
<dbReference type="Proteomes" id="UP000000530">
    <property type="component" value="Chromosome"/>
</dbReference>
<dbReference type="GO" id="GO:0009986">
    <property type="term" value="C:cell surface"/>
    <property type="evidence" value="ECO:0007669"/>
    <property type="project" value="UniProtKB-SubCell"/>
</dbReference>
<dbReference type="GO" id="GO:0005576">
    <property type="term" value="C:extracellular region"/>
    <property type="evidence" value="ECO:0007669"/>
    <property type="project" value="UniProtKB-SubCell"/>
</dbReference>
<dbReference type="GO" id="GO:0000015">
    <property type="term" value="C:phosphopyruvate hydratase complex"/>
    <property type="evidence" value="ECO:0007669"/>
    <property type="project" value="InterPro"/>
</dbReference>
<dbReference type="GO" id="GO:0000287">
    <property type="term" value="F:magnesium ion binding"/>
    <property type="evidence" value="ECO:0007669"/>
    <property type="project" value="UniProtKB-UniRule"/>
</dbReference>
<dbReference type="GO" id="GO:0004634">
    <property type="term" value="F:phosphopyruvate hydratase activity"/>
    <property type="evidence" value="ECO:0007669"/>
    <property type="project" value="UniProtKB-UniRule"/>
</dbReference>
<dbReference type="GO" id="GO:0006096">
    <property type="term" value="P:glycolytic process"/>
    <property type="evidence" value="ECO:0007669"/>
    <property type="project" value="UniProtKB-UniRule"/>
</dbReference>
<dbReference type="CDD" id="cd03313">
    <property type="entry name" value="enolase"/>
    <property type="match status" value="1"/>
</dbReference>
<dbReference type="FunFam" id="3.20.20.120:FF:000001">
    <property type="entry name" value="Enolase"/>
    <property type="match status" value="1"/>
</dbReference>
<dbReference type="FunFam" id="3.30.390.10:FF:000001">
    <property type="entry name" value="Enolase"/>
    <property type="match status" value="1"/>
</dbReference>
<dbReference type="Gene3D" id="3.20.20.120">
    <property type="entry name" value="Enolase-like C-terminal domain"/>
    <property type="match status" value="1"/>
</dbReference>
<dbReference type="Gene3D" id="3.30.390.10">
    <property type="entry name" value="Enolase-like, N-terminal domain"/>
    <property type="match status" value="1"/>
</dbReference>
<dbReference type="HAMAP" id="MF_00318">
    <property type="entry name" value="Enolase"/>
    <property type="match status" value="1"/>
</dbReference>
<dbReference type="InterPro" id="IPR000941">
    <property type="entry name" value="Enolase"/>
</dbReference>
<dbReference type="InterPro" id="IPR036849">
    <property type="entry name" value="Enolase-like_C_sf"/>
</dbReference>
<dbReference type="InterPro" id="IPR029017">
    <property type="entry name" value="Enolase-like_N"/>
</dbReference>
<dbReference type="InterPro" id="IPR020810">
    <property type="entry name" value="Enolase_C"/>
</dbReference>
<dbReference type="InterPro" id="IPR020809">
    <property type="entry name" value="Enolase_CS"/>
</dbReference>
<dbReference type="InterPro" id="IPR020811">
    <property type="entry name" value="Enolase_N"/>
</dbReference>
<dbReference type="NCBIfam" id="TIGR01060">
    <property type="entry name" value="eno"/>
    <property type="match status" value="1"/>
</dbReference>
<dbReference type="PANTHER" id="PTHR11902">
    <property type="entry name" value="ENOLASE"/>
    <property type="match status" value="1"/>
</dbReference>
<dbReference type="PANTHER" id="PTHR11902:SF1">
    <property type="entry name" value="ENOLASE"/>
    <property type="match status" value="1"/>
</dbReference>
<dbReference type="Pfam" id="PF00113">
    <property type="entry name" value="Enolase_C"/>
    <property type="match status" value="1"/>
</dbReference>
<dbReference type="Pfam" id="PF03952">
    <property type="entry name" value="Enolase_N"/>
    <property type="match status" value="1"/>
</dbReference>
<dbReference type="PIRSF" id="PIRSF001400">
    <property type="entry name" value="Enolase"/>
    <property type="match status" value="1"/>
</dbReference>
<dbReference type="PRINTS" id="PR00148">
    <property type="entry name" value="ENOLASE"/>
</dbReference>
<dbReference type="SFLD" id="SFLDF00002">
    <property type="entry name" value="enolase"/>
    <property type="match status" value="1"/>
</dbReference>
<dbReference type="SFLD" id="SFLDG00178">
    <property type="entry name" value="enolase"/>
    <property type="match status" value="1"/>
</dbReference>
<dbReference type="SMART" id="SM01192">
    <property type="entry name" value="Enolase_C"/>
    <property type="match status" value="1"/>
</dbReference>
<dbReference type="SMART" id="SM01193">
    <property type="entry name" value="Enolase_N"/>
    <property type="match status" value="1"/>
</dbReference>
<dbReference type="SUPFAM" id="SSF51604">
    <property type="entry name" value="Enolase C-terminal domain-like"/>
    <property type="match status" value="1"/>
</dbReference>
<dbReference type="SUPFAM" id="SSF54826">
    <property type="entry name" value="Enolase N-terminal domain-like"/>
    <property type="match status" value="1"/>
</dbReference>
<dbReference type="PROSITE" id="PS00164">
    <property type="entry name" value="ENOLASE"/>
    <property type="match status" value="1"/>
</dbReference>
<organism>
    <name type="scientific">Staphylococcus aureus (strain COL)</name>
    <dbReference type="NCBI Taxonomy" id="93062"/>
    <lineage>
        <taxon>Bacteria</taxon>
        <taxon>Bacillati</taxon>
        <taxon>Bacillota</taxon>
        <taxon>Bacilli</taxon>
        <taxon>Bacillales</taxon>
        <taxon>Staphylococcaceae</taxon>
        <taxon>Staphylococcus</taxon>
    </lineage>
</organism>
<comment type="function">
    <text evidence="1">Catalyzes the reversible conversion of 2-phosphoglycerate (2-PG) into phosphoenolpyruvate (PEP). It is essential for the degradation of carbohydrates via glycolysis.</text>
</comment>
<comment type="catalytic activity">
    <reaction evidence="1">
        <text>(2R)-2-phosphoglycerate = phosphoenolpyruvate + H2O</text>
        <dbReference type="Rhea" id="RHEA:10164"/>
        <dbReference type="ChEBI" id="CHEBI:15377"/>
        <dbReference type="ChEBI" id="CHEBI:58289"/>
        <dbReference type="ChEBI" id="CHEBI:58702"/>
        <dbReference type="EC" id="4.2.1.11"/>
    </reaction>
</comment>
<comment type="cofactor">
    <cofactor evidence="1">
        <name>Mg(2+)</name>
        <dbReference type="ChEBI" id="CHEBI:18420"/>
    </cofactor>
    <text evidence="1">Binds a second Mg(2+) ion via substrate during catalysis.</text>
</comment>
<comment type="pathway">
    <text evidence="1">Carbohydrate degradation; glycolysis; pyruvate from D-glyceraldehyde 3-phosphate: step 4/5.</text>
</comment>
<comment type="subcellular location">
    <subcellularLocation>
        <location evidence="1">Cytoplasm</location>
    </subcellularLocation>
    <subcellularLocation>
        <location evidence="1">Secreted</location>
    </subcellularLocation>
    <subcellularLocation>
        <location evidence="1">Cell surface</location>
    </subcellularLocation>
    <text evidence="1">Fractions of enolase are present in both the cytoplasm and on the cell surface.</text>
</comment>
<comment type="similarity">
    <text evidence="1">Belongs to the enolase family.</text>
</comment>
<keyword id="KW-0963">Cytoplasm</keyword>
<keyword id="KW-0324">Glycolysis</keyword>
<keyword id="KW-0456">Lyase</keyword>
<keyword id="KW-0460">Magnesium</keyword>
<keyword id="KW-0479">Metal-binding</keyword>
<keyword id="KW-0964">Secreted</keyword>
<keyword id="KW-0843">Virulence</keyword>
<accession>Q5HHP1</accession>
<proteinExistence type="inferred from homology"/>